<reference key="1">
    <citation type="journal article" date="2001" name="Lancet">
        <title>Whole genome sequencing of meticillin-resistant Staphylococcus aureus.</title>
        <authorList>
            <person name="Kuroda M."/>
            <person name="Ohta T."/>
            <person name="Uchiyama I."/>
            <person name="Baba T."/>
            <person name="Yuzawa H."/>
            <person name="Kobayashi I."/>
            <person name="Cui L."/>
            <person name="Oguchi A."/>
            <person name="Aoki K."/>
            <person name="Nagai Y."/>
            <person name="Lian J.-Q."/>
            <person name="Ito T."/>
            <person name="Kanamori M."/>
            <person name="Matsumaru H."/>
            <person name="Maruyama A."/>
            <person name="Murakami H."/>
            <person name="Hosoyama A."/>
            <person name="Mizutani-Ui Y."/>
            <person name="Takahashi N.K."/>
            <person name="Sawano T."/>
            <person name="Inoue R."/>
            <person name="Kaito C."/>
            <person name="Sekimizu K."/>
            <person name="Hirakawa H."/>
            <person name="Kuhara S."/>
            <person name="Goto S."/>
            <person name="Yabuzaki J."/>
            <person name="Kanehisa M."/>
            <person name="Yamashita A."/>
            <person name="Oshima K."/>
            <person name="Furuya K."/>
            <person name="Yoshino C."/>
            <person name="Shiba T."/>
            <person name="Hattori M."/>
            <person name="Ogasawara N."/>
            <person name="Hayashi H."/>
            <person name="Hiramatsu K."/>
        </authorList>
    </citation>
    <scope>NUCLEOTIDE SEQUENCE [LARGE SCALE GENOMIC DNA]</scope>
    <source>
        <strain>N315</strain>
    </source>
</reference>
<reference key="2">
    <citation type="submission" date="2007-10" db="UniProtKB">
        <title>Shotgun proteomic analysis of total and membrane protein extracts of S. aureus strain N315.</title>
        <authorList>
            <person name="Vaezzadeh A.R."/>
            <person name="Deshusses J."/>
            <person name="Lescuyer P."/>
            <person name="Hochstrasser D.F."/>
        </authorList>
    </citation>
    <scope>IDENTIFICATION BY MASS SPECTROMETRY [LARGE SCALE ANALYSIS]</scope>
    <source>
        <strain>N315</strain>
    </source>
</reference>
<sequence length="514" mass="58917">MNEEQRKASSVDVLAERDKKAEKDYSKYFEHVYQPPNLKEAKKRGKQEVRYNRDFQIDEKYRGMGNERTFLIKTYGCQMNAHDTEVIAGILEALGYQATTDINTADVILINTCAIRENAENKVFSEIGNLKHLKKERPDILIGVCGCMSQEESVVNKILKSYQNVDMIFGTHNIHHLPEILEEAYLSKAMVVEVWSKEGDVIENLPKVREGNIKAWVNIMYGCDKFCTYCIVPFTRGKERSRRPEDIIDEVRELAREGYKEITLLGQNVNSYGKDLQDIEYDLGDLLQAISKIAIPRVRFTTSHPWDFTDHMIDVISEGGNIVPHIHLPVQSGNNAVLKIMGRKYTRESYLDLVKRIKDRIPNVALTTDIIVGYPNESEEQFEETLTLYDEVGFEHAYTYLYSQRDGTPAAKMKDNVPLNVKKERLQRLNKKVGHYSQIAMSKYEGQTVTVLCEGSSKKDDQVLAGYTDKNKLVNFKAPKEMIGKLVEVRIDEAKQYSLNGSFVKEVEPEMVIQ</sequence>
<keyword id="KW-0004">4Fe-4S</keyword>
<keyword id="KW-0963">Cytoplasm</keyword>
<keyword id="KW-0408">Iron</keyword>
<keyword id="KW-0411">Iron-sulfur</keyword>
<keyword id="KW-0479">Metal-binding</keyword>
<keyword id="KW-0949">S-adenosyl-L-methionine</keyword>
<keyword id="KW-0808">Transferase</keyword>
<keyword id="KW-0819">tRNA processing</keyword>
<comment type="function">
    <text evidence="1">Catalyzes the methylthiolation of N6-(dimethylallyl)adenosine (i(6)A), leading to the formation of 2-methylthio-N6-(dimethylallyl)adenosine (ms(2)i(6)A) at position 37 in tRNAs that read codons beginning with uridine.</text>
</comment>
<comment type="catalytic activity">
    <reaction evidence="1">
        <text>N(6)-dimethylallyladenosine(37) in tRNA + (sulfur carrier)-SH + AH2 + 2 S-adenosyl-L-methionine = 2-methylsulfanyl-N(6)-dimethylallyladenosine(37) in tRNA + (sulfur carrier)-H + 5'-deoxyadenosine + L-methionine + A + S-adenosyl-L-homocysteine + 2 H(+)</text>
        <dbReference type="Rhea" id="RHEA:37067"/>
        <dbReference type="Rhea" id="RHEA-COMP:10375"/>
        <dbReference type="Rhea" id="RHEA-COMP:10376"/>
        <dbReference type="Rhea" id="RHEA-COMP:14737"/>
        <dbReference type="Rhea" id="RHEA-COMP:14739"/>
        <dbReference type="ChEBI" id="CHEBI:13193"/>
        <dbReference type="ChEBI" id="CHEBI:15378"/>
        <dbReference type="ChEBI" id="CHEBI:17319"/>
        <dbReference type="ChEBI" id="CHEBI:17499"/>
        <dbReference type="ChEBI" id="CHEBI:29917"/>
        <dbReference type="ChEBI" id="CHEBI:57844"/>
        <dbReference type="ChEBI" id="CHEBI:57856"/>
        <dbReference type="ChEBI" id="CHEBI:59789"/>
        <dbReference type="ChEBI" id="CHEBI:64428"/>
        <dbReference type="ChEBI" id="CHEBI:74415"/>
        <dbReference type="ChEBI" id="CHEBI:74417"/>
        <dbReference type="EC" id="2.8.4.3"/>
    </reaction>
</comment>
<comment type="cofactor">
    <cofactor evidence="1">
        <name>[4Fe-4S] cluster</name>
        <dbReference type="ChEBI" id="CHEBI:49883"/>
    </cofactor>
    <text evidence="1">Binds 2 [4Fe-4S] clusters. One cluster is coordinated with 3 cysteines and an exchangeable S-adenosyl-L-methionine.</text>
</comment>
<comment type="subunit">
    <text evidence="1">Monomer.</text>
</comment>
<comment type="subcellular location">
    <subcellularLocation>
        <location evidence="1">Cytoplasm</location>
    </subcellularLocation>
</comment>
<comment type="similarity">
    <text evidence="1">Belongs to the methylthiotransferase family. MiaB subfamily.</text>
</comment>
<proteinExistence type="evidence at protein level"/>
<protein>
    <recommendedName>
        <fullName evidence="1">tRNA-2-methylthio-N(6)-dimethylallyladenosine synthase</fullName>
        <ecNumber evidence="1">2.8.4.3</ecNumber>
    </recommendedName>
    <alternativeName>
        <fullName evidence="1">(Dimethylallyl)adenosine tRNA methylthiotransferase MiaB</fullName>
    </alternativeName>
    <alternativeName>
        <fullName evidence="1">tRNA-i(6)A37 methylthiotransferase</fullName>
    </alternativeName>
</protein>
<evidence type="ECO:0000255" key="1">
    <source>
        <dbReference type="HAMAP-Rule" id="MF_01864"/>
    </source>
</evidence>
<evidence type="ECO:0000255" key="2">
    <source>
        <dbReference type="PROSITE-ProRule" id="PRU01266"/>
    </source>
</evidence>
<evidence type="ECO:0000256" key="3">
    <source>
        <dbReference type="SAM" id="MobiDB-lite"/>
    </source>
</evidence>
<organism>
    <name type="scientific">Staphylococcus aureus (strain N315)</name>
    <dbReference type="NCBI Taxonomy" id="158879"/>
    <lineage>
        <taxon>Bacteria</taxon>
        <taxon>Bacillati</taxon>
        <taxon>Bacillota</taxon>
        <taxon>Bacilli</taxon>
        <taxon>Bacillales</taxon>
        <taxon>Staphylococcaceae</taxon>
        <taxon>Staphylococcus</taxon>
    </lineage>
</organism>
<feature type="chain" id="PRO_0000374573" description="tRNA-2-methylthio-N(6)-dimethylallyladenosine synthase">
    <location>
        <begin position="1"/>
        <end position="514"/>
    </location>
</feature>
<feature type="domain" description="MTTase N-terminal" evidence="1">
    <location>
        <begin position="68"/>
        <end position="186"/>
    </location>
</feature>
<feature type="domain" description="Radical SAM core" evidence="2">
    <location>
        <begin position="209"/>
        <end position="440"/>
    </location>
</feature>
<feature type="domain" description="TRAM" evidence="1">
    <location>
        <begin position="442"/>
        <end position="505"/>
    </location>
</feature>
<feature type="region of interest" description="Disordered" evidence="3">
    <location>
        <begin position="1"/>
        <end position="21"/>
    </location>
</feature>
<feature type="binding site" evidence="1">
    <location>
        <position position="77"/>
    </location>
    <ligand>
        <name>[4Fe-4S] cluster</name>
        <dbReference type="ChEBI" id="CHEBI:49883"/>
        <label>1</label>
    </ligand>
</feature>
<feature type="binding site" evidence="1">
    <location>
        <position position="113"/>
    </location>
    <ligand>
        <name>[4Fe-4S] cluster</name>
        <dbReference type="ChEBI" id="CHEBI:49883"/>
        <label>1</label>
    </ligand>
</feature>
<feature type="binding site" evidence="1">
    <location>
        <position position="147"/>
    </location>
    <ligand>
        <name>[4Fe-4S] cluster</name>
        <dbReference type="ChEBI" id="CHEBI:49883"/>
        <label>1</label>
    </ligand>
</feature>
<feature type="binding site" evidence="1">
    <location>
        <position position="223"/>
    </location>
    <ligand>
        <name>[4Fe-4S] cluster</name>
        <dbReference type="ChEBI" id="CHEBI:49883"/>
        <label>2</label>
        <note>4Fe-4S-S-AdoMet</note>
    </ligand>
</feature>
<feature type="binding site" evidence="1">
    <location>
        <position position="227"/>
    </location>
    <ligand>
        <name>[4Fe-4S] cluster</name>
        <dbReference type="ChEBI" id="CHEBI:49883"/>
        <label>2</label>
        <note>4Fe-4S-S-AdoMet</note>
    </ligand>
</feature>
<feature type="binding site" evidence="1">
    <location>
        <position position="230"/>
    </location>
    <ligand>
        <name>[4Fe-4S] cluster</name>
        <dbReference type="ChEBI" id="CHEBI:49883"/>
        <label>2</label>
        <note>4Fe-4S-S-AdoMet</note>
    </ligand>
</feature>
<name>MIAB_STAAN</name>
<accession>Q7A5W3</accession>
<gene>
    <name evidence="1" type="primary">miaB</name>
    <name type="ordered locus">SA1134</name>
</gene>
<dbReference type="EC" id="2.8.4.3" evidence="1"/>
<dbReference type="EMBL" id="BA000018">
    <property type="protein sequence ID" value="BAB42387.1"/>
    <property type="molecule type" value="Genomic_DNA"/>
</dbReference>
<dbReference type="PIR" id="G89903">
    <property type="entry name" value="G89903"/>
</dbReference>
<dbReference type="RefSeq" id="WP_001001524.1">
    <property type="nucleotide sequence ID" value="NC_002745.2"/>
</dbReference>
<dbReference type="SMR" id="Q7A5W3"/>
<dbReference type="EnsemblBacteria" id="BAB42387">
    <property type="protein sequence ID" value="BAB42387"/>
    <property type="gene ID" value="BAB42387"/>
</dbReference>
<dbReference type="KEGG" id="sau:SA1134"/>
<dbReference type="HOGENOM" id="CLU_018697_2_0_9"/>
<dbReference type="GO" id="GO:0005829">
    <property type="term" value="C:cytosol"/>
    <property type="evidence" value="ECO:0007669"/>
    <property type="project" value="TreeGrafter"/>
</dbReference>
<dbReference type="GO" id="GO:0051539">
    <property type="term" value="F:4 iron, 4 sulfur cluster binding"/>
    <property type="evidence" value="ECO:0007669"/>
    <property type="project" value="UniProtKB-UniRule"/>
</dbReference>
<dbReference type="GO" id="GO:0046872">
    <property type="term" value="F:metal ion binding"/>
    <property type="evidence" value="ECO:0007669"/>
    <property type="project" value="UniProtKB-KW"/>
</dbReference>
<dbReference type="GO" id="GO:0035597">
    <property type="term" value="F:N6-isopentenyladenosine methylthiotransferase activity"/>
    <property type="evidence" value="ECO:0007669"/>
    <property type="project" value="TreeGrafter"/>
</dbReference>
<dbReference type="CDD" id="cd01335">
    <property type="entry name" value="Radical_SAM"/>
    <property type="match status" value="1"/>
</dbReference>
<dbReference type="FunFam" id="3.40.50.12160:FF:000006">
    <property type="entry name" value="tRNA-2-methylthio-N(6)-dimethylallyladenosine synthase"/>
    <property type="match status" value="1"/>
</dbReference>
<dbReference type="FunFam" id="3.80.30.20:FF:000001">
    <property type="entry name" value="tRNA-2-methylthio-N(6)-dimethylallyladenosine synthase 2"/>
    <property type="match status" value="1"/>
</dbReference>
<dbReference type="Gene3D" id="3.40.50.12160">
    <property type="entry name" value="Methylthiotransferase, N-terminal domain"/>
    <property type="match status" value="1"/>
</dbReference>
<dbReference type="Gene3D" id="3.80.30.20">
    <property type="entry name" value="tm_1862 like domain"/>
    <property type="match status" value="1"/>
</dbReference>
<dbReference type="HAMAP" id="MF_01864">
    <property type="entry name" value="tRNA_metthiotr_MiaB"/>
    <property type="match status" value="1"/>
</dbReference>
<dbReference type="InterPro" id="IPR006638">
    <property type="entry name" value="Elp3/MiaA/NifB-like_rSAM"/>
</dbReference>
<dbReference type="InterPro" id="IPR005839">
    <property type="entry name" value="Methylthiotransferase"/>
</dbReference>
<dbReference type="InterPro" id="IPR020612">
    <property type="entry name" value="Methylthiotransferase_CS"/>
</dbReference>
<dbReference type="InterPro" id="IPR013848">
    <property type="entry name" value="Methylthiotransferase_N"/>
</dbReference>
<dbReference type="InterPro" id="IPR038135">
    <property type="entry name" value="Methylthiotransferase_N_sf"/>
</dbReference>
<dbReference type="InterPro" id="IPR006463">
    <property type="entry name" value="MiaB_methiolase"/>
</dbReference>
<dbReference type="InterPro" id="IPR007197">
    <property type="entry name" value="rSAM"/>
</dbReference>
<dbReference type="InterPro" id="IPR023404">
    <property type="entry name" value="rSAM_horseshoe"/>
</dbReference>
<dbReference type="InterPro" id="IPR002792">
    <property type="entry name" value="TRAM_dom"/>
</dbReference>
<dbReference type="NCBIfam" id="TIGR01574">
    <property type="entry name" value="miaB-methiolase"/>
    <property type="match status" value="1"/>
</dbReference>
<dbReference type="NCBIfam" id="TIGR00089">
    <property type="entry name" value="MiaB/RimO family radical SAM methylthiotransferase"/>
    <property type="match status" value="1"/>
</dbReference>
<dbReference type="PANTHER" id="PTHR43020">
    <property type="entry name" value="CDK5 REGULATORY SUBUNIT-ASSOCIATED PROTEIN 1"/>
    <property type="match status" value="1"/>
</dbReference>
<dbReference type="PANTHER" id="PTHR43020:SF2">
    <property type="entry name" value="MITOCHONDRIAL TRNA METHYLTHIOTRANSFERASE CDK5RAP1"/>
    <property type="match status" value="1"/>
</dbReference>
<dbReference type="Pfam" id="PF04055">
    <property type="entry name" value="Radical_SAM"/>
    <property type="match status" value="1"/>
</dbReference>
<dbReference type="Pfam" id="PF01938">
    <property type="entry name" value="TRAM"/>
    <property type="match status" value="1"/>
</dbReference>
<dbReference type="Pfam" id="PF00919">
    <property type="entry name" value="UPF0004"/>
    <property type="match status" value="1"/>
</dbReference>
<dbReference type="SFLD" id="SFLDF00273">
    <property type="entry name" value="(dimethylallyl)adenosine_tRNA"/>
    <property type="match status" value="1"/>
</dbReference>
<dbReference type="SFLD" id="SFLDG01082">
    <property type="entry name" value="B12-binding_domain_containing"/>
    <property type="match status" value="1"/>
</dbReference>
<dbReference type="SFLD" id="SFLDS00029">
    <property type="entry name" value="Radical_SAM"/>
    <property type="match status" value="1"/>
</dbReference>
<dbReference type="SMART" id="SM00729">
    <property type="entry name" value="Elp3"/>
    <property type="match status" value="1"/>
</dbReference>
<dbReference type="SUPFAM" id="SSF102114">
    <property type="entry name" value="Radical SAM enzymes"/>
    <property type="match status" value="1"/>
</dbReference>
<dbReference type="PROSITE" id="PS51449">
    <property type="entry name" value="MTTASE_N"/>
    <property type="match status" value="1"/>
</dbReference>
<dbReference type="PROSITE" id="PS01278">
    <property type="entry name" value="MTTASE_RADICAL"/>
    <property type="match status" value="1"/>
</dbReference>
<dbReference type="PROSITE" id="PS51918">
    <property type="entry name" value="RADICAL_SAM"/>
    <property type="match status" value="1"/>
</dbReference>
<dbReference type="PROSITE" id="PS50926">
    <property type="entry name" value="TRAM"/>
    <property type="match status" value="1"/>
</dbReference>